<reference key="1">
    <citation type="journal article" date="2009" name="Genome Res.">
        <title>Comparative genomics of protoploid Saccharomycetaceae.</title>
        <authorList>
            <consortium name="The Genolevures Consortium"/>
            <person name="Souciet J.-L."/>
            <person name="Dujon B."/>
            <person name="Gaillardin C."/>
            <person name="Johnston M."/>
            <person name="Baret P.V."/>
            <person name="Cliften P."/>
            <person name="Sherman D.J."/>
            <person name="Weissenbach J."/>
            <person name="Westhof E."/>
            <person name="Wincker P."/>
            <person name="Jubin C."/>
            <person name="Poulain J."/>
            <person name="Barbe V."/>
            <person name="Segurens B."/>
            <person name="Artiguenave F."/>
            <person name="Anthouard V."/>
            <person name="Vacherie B."/>
            <person name="Val M.-E."/>
            <person name="Fulton R.S."/>
            <person name="Minx P."/>
            <person name="Wilson R."/>
            <person name="Durrens P."/>
            <person name="Jean G."/>
            <person name="Marck C."/>
            <person name="Martin T."/>
            <person name="Nikolski M."/>
            <person name="Rolland T."/>
            <person name="Seret M.-L."/>
            <person name="Casaregola S."/>
            <person name="Despons L."/>
            <person name="Fairhead C."/>
            <person name="Fischer G."/>
            <person name="Lafontaine I."/>
            <person name="Leh V."/>
            <person name="Lemaire M."/>
            <person name="de Montigny J."/>
            <person name="Neuveglise C."/>
            <person name="Thierry A."/>
            <person name="Blanc-Lenfle I."/>
            <person name="Bleykasten C."/>
            <person name="Diffels J."/>
            <person name="Fritsch E."/>
            <person name="Frangeul L."/>
            <person name="Goeffon A."/>
            <person name="Jauniaux N."/>
            <person name="Kachouri-Lafond R."/>
            <person name="Payen C."/>
            <person name="Potier S."/>
            <person name="Pribylova L."/>
            <person name="Ozanne C."/>
            <person name="Richard G.-F."/>
            <person name="Sacerdot C."/>
            <person name="Straub M.-L."/>
            <person name="Talla E."/>
        </authorList>
    </citation>
    <scope>NUCLEOTIDE SEQUENCE [LARGE SCALE GENOMIC DNA]</scope>
    <source>
        <strain>ATCC 56472 / CBS 6340 / NRRL Y-8284</strain>
    </source>
</reference>
<keyword id="KW-0496">Mitochondrion</keyword>
<keyword id="KW-1185">Reference proteome</keyword>
<keyword id="KW-0809">Transit peptide</keyword>
<accession>C5DE09</accession>
<protein>
    <recommendedName>
        <fullName>Altered inheritance of mitochondria protein 24, mitochondrial</fullName>
    </recommendedName>
</protein>
<comment type="subcellular location">
    <subcellularLocation>
        <location evidence="1">Mitochondrion</location>
    </subcellularLocation>
</comment>
<comment type="similarity">
    <text evidence="4">Belongs to the AIM24 family.</text>
</comment>
<evidence type="ECO:0000250" key="1"/>
<evidence type="ECO:0000255" key="2"/>
<evidence type="ECO:0000256" key="3">
    <source>
        <dbReference type="SAM" id="MobiDB-lite"/>
    </source>
</evidence>
<evidence type="ECO:0000305" key="4"/>
<feature type="transit peptide" description="Mitochondrion" evidence="2">
    <location>
        <begin position="1"/>
        <end position="25"/>
    </location>
</feature>
<feature type="chain" id="PRO_0000399581" description="Altered inheritance of mitochondria protein 24, mitochondrial">
    <location>
        <begin position="26"/>
        <end position="402"/>
    </location>
</feature>
<feature type="region of interest" description="Disordered" evidence="3">
    <location>
        <begin position="343"/>
        <end position="365"/>
    </location>
</feature>
<feature type="compositionally biased region" description="Low complexity" evidence="3">
    <location>
        <begin position="343"/>
        <end position="364"/>
    </location>
</feature>
<sequence length="402" mass="43285">MKAAALRLGHASVAKRSISLVRPVAATVVPAQMAQKPDAEPIFGQEDNSDIQDAQFRVLGQPPTLCSVHVPASVSLHVRRGCLVSLHGVGEQNAVAISQEWIGLAWNLAKHGSWRAALFHQLVAPRAFSALVAPNVNGGKIASWFGVSAQQFRTLCLLDLDGTQDWCVLGKHSLIAYEGNTSLRIQRSSVWPSWLHFNRGDSALPSTYQLIQGRGNALLSGAGSVYTIELPNENEELILKGEHLLAISGRTPRDIAEAVTEYSFPAVSVPAIPETAVSKGRTPMPTSSLSAFSTALASYSRNAVSWLRHAYTSYINGTTKYLRIRGPRFLLVQSAHNAFMPATSPSAVQPPSSPVSVKAPASTPNSKDYLSYVTVGKDASVSFQSTPDFNKKVAEIEALKHK</sequence>
<gene>
    <name type="primary">aim24</name>
    <name type="ordered locus">KLTH0C05368g</name>
</gene>
<name>AIM24_LACTC</name>
<dbReference type="EMBL" id="CU928167">
    <property type="protein sequence ID" value="CAR22020.1"/>
    <property type="molecule type" value="Genomic_DNA"/>
</dbReference>
<dbReference type="RefSeq" id="XP_002552458.1">
    <property type="nucleotide sequence ID" value="XM_002552412.1"/>
</dbReference>
<dbReference type="FunCoup" id="C5DE09">
    <property type="interactions" value="18"/>
</dbReference>
<dbReference type="GeneID" id="8291325"/>
<dbReference type="KEGG" id="lth:KLTH0C05368g"/>
<dbReference type="eggNOG" id="ENOG502RXC5">
    <property type="taxonomic scope" value="Eukaryota"/>
</dbReference>
<dbReference type="HOGENOM" id="CLU_057912_0_0_1"/>
<dbReference type="InParanoid" id="C5DE09"/>
<dbReference type="OMA" id="NGPYDLQ"/>
<dbReference type="OrthoDB" id="5295771at2759"/>
<dbReference type="Proteomes" id="UP000002036">
    <property type="component" value="Chromosome C"/>
</dbReference>
<dbReference type="GO" id="GO:0005743">
    <property type="term" value="C:mitochondrial inner membrane"/>
    <property type="evidence" value="ECO:0007669"/>
    <property type="project" value="TreeGrafter"/>
</dbReference>
<dbReference type="GO" id="GO:0007007">
    <property type="term" value="P:inner mitochondrial membrane organization"/>
    <property type="evidence" value="ECO:0007669"/>
    <property type="project" value="TreeGrafter"/>
</dbReference>
<dbReference type="Gene3D" id="3.60.160.10">
    <property type="entry name" value="Mitochondrial biogenesis AIM24"/>
    <property type="match status" value="1"/>
</dbReference>
<dbReference type="InterPro" id="IPR002838">
    <property type="entry name" value="AIM24"/>
</dbReference>
<dbReference type="InterPro" id="IPR036983">
    <property type="entry name" value="AIM24_sf"/>
</dbReference>
<dbReference type="InterPro" id="IPR016031">
    <property type="entry name" value="Trp_RNA-bd_attenuator-like_dom"/>
</dbReference>
<dbReference type="PANTHER" id="PTHR36959">
    <property type="entry name" value="ALTERED INHERITANCE OF MITOCHONDRIA PROTEIN 24, MITOCHONDRIAL"/>
    <property type="match status" value="1"/>
</dbReference>
<dbReference type="PANTHER" id="PTHR36959:SF2">
    <property type="entry name" value="ALTERED INHERITANCE OF MITOCHONDRIA PROTEIN 24, MITOCHONDRIAL"/>
    <property type="match status" value="1"/>
</dbReference>
<dbReference type="Pfam" id="PF01987">
    <property type="entry name" value="AIM24"/>
    <property type="match status" value="1"/>
</dbReference>
<dbReference type="SUPFAM" id="SSF51219">
    <property type="entry name" value="TRAP-like"/>
    <property type="match status" value="1"/>
</dbReference>
<proteinExistence type="inferred from homology"/>
<organism>
    <name type="scientific">Lachancea thermotolerans (strain ATCC 56472 / CBS 6340 / NRRL Y-8284)</name>
    <name type="common">Yeast</name>
    <name type="synonym">Kluyveromyces thermotolerans</name>
    <dbReference type="NCBI Taxonomy" id="559295"/>
    <lineage>
        <taxon>Eukaryota</taxon>
        <taxon>Fungi</taxon>
        <taxon>Dikarya</taxon>
        <taxon>Ascomycota</taxon>
        <taxon>Saccharomycotina</taxon>
        <taxon>Saccharomycetes</taxon>
        <taxon>Saccharomycetales</taxon>
        <taxon>Saccharomycetaceae</taxon>
        <taxon>Lachancea</taxon>
    </lineage>
</organism>